<keyword id="KW-0150">Chloroplast</keyword>
<keyword id="KW-0539">Nucleus</keyword>
<keyword id="KW-0934">Plastid</keyword>
<keyword id="KW-1185">Reference proteome</keyword>
<keyword id="KW-0809">Transit peptide</keyword>
<evidence type="ECO:0000250" key="1">
    <source>
        <dbReference type="UniProtKB" id="Q9LDH1"/>
    </source>
</evidence>
<evidence type="ECO:0000255" key="2"/>
<evidence type="ECO:0000256" key="3">
    <source>
        <dbReference type="SAM" id="MobiDB-lite"/>
    </source>
</evidence>
<evidence type="ECO:0000269" key="4">
    <source>
    </source>
</evidence>
<evidence type="ECO:0000303" key="5">
    <source>
    </source>
</evidence>
<evidence type="ECO:0000305" key="6"/>
<evidence type="ECO:0000305" key="7">
    <source>
    </source>
</evidence>
<reference key="1">
    <citation type="journal article" date="1999" name="Nature">
        <title>Sequence and analysis of chromosome 2 of the plant Arabidopsis thaliana.</title>
        <authorList>
            <person name="Lin X."/>
            <person name="Kaul S."/>
            <person name="Rounsley S.D."/>
            <person name="Shea T.P."/>
            <person name="Benito M.-I."/>
            <person name="Town C.D."/>
            <person name="Fujii C.Y."/>
            <person name="Mason T.M."/>
            <person name="Bowman C.L."/>
            <person name="Barnstead M.E."/>
            <person name="Feldblyum T.V."/>
            <person name="Buell C.R."/>
            <person name="Ketchum K.A."/>
            <person name="Lee J.J."/>
            <person name="Ronning C.M."/>
            <person name="Koo H.L."/>
            <person name="Moffat K.S."/>
            <person name="Cronin L.A."/>
            <person name="Shen M."/>
            <person name="Pai G."/>
            <person name="Van Aken S."/>
            <person name="Umayam L."/>
            <person name="Tallon L.J."/>
            <person name="Gill J.E."/>
            <person name="Adams M.D."/>
            <person name="Carrera A.J."/>
            <person name="Creasy T.H."/>
            <person name="Goodman H.M."/>
            <person name="Somerville C.R."/>
            <person name="Copenhaver G.P."/>
            <person name="Preuss D."/>
            <person name="Nierman W.C."/>
            <person name="White O."/>
            <person name="Eisen J.A."/>
            <person name="Salzberg S.L."/>
            <person name="Fraser C.M."/>
            <person name="Venter J.C."/>
        </authorList>
    </citation>
    <scope>NUCLEOTIDE SEQUENCE [LARGE SCALE GENOMIC DNA]</scope>
    <source>
        <strain>cv. Columbia</strain>
    </source>
</reference>
<reference key="2">
    <citation type="journal article" date="2017" name="Plant J.">
        <title>Araport11: a complete reannotation of the Arabidopsis thaliana reference genome.</title>
        <authorList>
            <person name="Cheng C.Y."/>
            <person name="Krishnakumar V."/>
            <person name="Chan A.P."/>
            <person name="Thibaud-Nissen F."/>
            <person name="Schobel S."/>
            <person name="Town C.D."/>
        </authorList>
    </citation>
    <scope>GENOME REANNOTATION</scope>
    <source>
        <strain>cv. Columbia</strain>
    </source>
</reference>
<reference key="3">
    <citation type="journal article" date="2003" name="Science">
        <title>Empirical analysis of transcriptional activity in the Arabidopsis genome.</title>
        <authorList>
            <person name="Yamada K."/>
            <person name="Lim J."/>
            <person name="Dale J.M."/>
            <person name="Chen H."/>
            <person name="Shinn P."/>
            <person name="Palm C.J."/>
            <person name="Southwick A.M."/>
            <person name="Wu H.C."/>
            <person name="Kim C.J."/>
            <person name="Nguyen M."/>
            <person name="Pham P.K."/>
            <person name="Cheuk R.F."/>
            <person name="Karlin-Newmann G."/>
            <person name="Liu S.X."/>
            <person name="Lam B."/>
            <person name="Sakano H."/>
            <person name="Wu T."/>
            <person name="Yu G."/>
            <person name="Miranda M."/>
            <person name="Quach H.L."/>
            <person name="Tripp M."/>
            <person name="Chang C.H."/>
            <person name="Lee J.M."/>
            <person name="Toriumi M.J."/>
            <person name="Chan M.M."/>
            <person name="Tang C.C."/>
            <person name="Onodera C.S."/>
            <person name="Deng J.M."/>
            <person name="Akiyama K."/>
            <person name="Ansari Y."/>
            <person name="Arakawa T."/>
            <person name="Banh J."/>
            <person name="Banno F."/>
            <person name="Bowser L."/>
            <person name="Brooks S.Y."/>
            <person name="Carninci P."/>
            <person name="Chao Q."/>
            <person name="Choy N."/>
            <person name="Enju A."/>
            <person name="Goldsmith A.D."/>
            <person name="Gurjal M."/>
            <person name="Hansen N.F."/>
            <person name="Hayashizaki Y."/>
            <person name="Johnson-Hopson C."/>
            <person name="Hsuan V.W."/>
            <person name="Iida K."/>
            <person name="Karnes M."/>
            <person name="Khan S."/>
            <person name="Koesema E."/>
            <person name="Ishida J."/>
            <person name="Jiang P.X."/>
            <person name="Jones T."/>
            <person name="Kawai J."/>
            <person name="Kamiya A."/>
            <person name="Meyers C."/>
            <person name="Nakajima M."/>
            <person name="Narusaka M."/>
            <person name="Seki M."/>
            <person name="Sakurai T."/>
            <person name="Satou M."/>
            <person name="Tamse R."/>
            <person name="Vaysberg M."/>
            <person name="Wallender E.K."/>
            <person name="Wong C."/>
            <person name="Yamamura Y."/>
            <person name="Yuan S."/>
            <person name="Shinozaki K."/>
            <person name="Davis R.W."/>
            <person name="Theologis A."/>
            <person name="Ecker J.R."/>
        </authorList>
    </citation>
    <scope>NUCLEOTIDE SEQUENCE [LARGE SCALE MRNA]</scope>
    <source>
        <strain>cv. Columbia</strain>
    </source>
</reference>
<reference key="4">
    <citation type="journal article" date="2011" name="Plant Cell">
        <title>Arabidopsis sigma factor binding proteins are activators of the WRKY33 transcription factor in plant defense.</title>
        <authorList>
            <person name="Lai Z."/>
            <person name="Li Y."/>
            <person name="Wang F."/>
            <person name="Cheng Y."/>
            <person name="Fan B."/>
            <person name="Yu J.Q."/>
            <person name="Chen Z."/>
        </authorList>
    </citation>
    <scope>FUNCTION</scope>
    <scope>INTERACTION WITH WRKY33</scope>
    <scope>SUBCELLULAR LOCATION</scope>
    <scope>INDUCTION</scope>
    <scope>DISRUPTION PHENOTYPE</scope>
</reference>
<reference key="5">
    <citation type="journal article" date="2012" name="Plant Physiol.">
        <title>Structural and functional analysis of VQ motif-containing proteins in Arabidopsis as interacting proteins of WRKY transcription factors.</title>
        <authorList>
            <person name="Cheng Y."/>
            <person name="Zhou Y."/>
            <person name="Yang Y."/>
            <person name="Chi Y.J."/>
            <person name="Zhou J."/>
            <person name="Chen J.Y."/>
            <person name="Wang F."/>
            <person name="Fan B."/>
            <person name="Shi K."/>
            <person name="Zhou Y.H."/>
            <person name="Yu J.Q."/>
            <person name="Chen Z."/>
        </authorList>
    </citation>
    <scope>GENE FAMILY</scope>
    <scope>NOMENCLATURE</scope>
</reference>
<accession>O80669</accession>
<comment type="function">
    <text evidence="4">Functions as activator of WRKY33 in plant defense against necrotrophic pathogens by stimulating the DNA-binding activity of WRKY33.</text>
</comment>
<comment type="subunit">
    <text evidence="1 4">Interacts with sigma factors in chloroplast (By similarity). Interacts with WRKY33 in the nucleus (PubMed:21990940).</text>
</comment>
<comment type="subcellular location">
    <subcellularLocation>
        <location evidence="1">Plastid</location>
        <location evidence="1">Chloroplast</location>
    </subcellularLocation>
    <subcellularLocation>
        <location evidence="4">Nucleus</location>
    </subcellularLocation>
    <text evidence="6">Can localize to both chloroplast and nucleus.</text>
</comment>
<comment type="induction">
    <text evidence="4">By infection with the necrotrophic fungal pathogen B.cinerea.</text>
</comment>
<comment type="disruption phenotype">
    <text evidence="4">No visible phenotype under normal growth conditions, but mutant plants have increased susceptibility to the necrotrophic fungal pathogen B.cinerea.</text>
</comment>
<feature type="transit peptide" description="Chloroplast" evidence="2">
    <location>
        <begin position="1"/>
        <end position="38"/>
    </location>
</feature>
<feature type="chain" id="PRO_0000418099" description="Sigma factor binding protein 2, chloroplastic">
    <location>
        <begin position="39"/>
        <end position="141"/>
    </location>
</feature>
<feature type="region of interest" description="Disordered" evidence="3">
    <location>
        <begin position="1"/>
        <end position="36"/>
    </location>
</feature>
<feature type="short sequence motif" description="Bipartite nuclear localization signal" evidence="7">
    <location>
        <begin position="13"/>
        <end position="29"/>
    </location>
</feature>
<feature type="short sequence motif" description="VQ" evidence="6">
    <location>
        <begin position="55"/>
        <end position="64"/>
    </location>
</feature>
<feature type="compositionally biased region" description="Polar residues" evidence="3">
    <location>
        <begin position="1"/>
        <end position="20"/>
    </location>
</feature>
<feature type="compositionally biased region" description="Basic residues" evidence="3">
    <location>
        <begin position="24"/>
        <end position="36"/>
    </location>
</feature>
<name>SIB2_ARATH</name>
<organism>
    <name type="scientific">Arabidopsis thaliana</name>
    <name type="common">Mouse-ear cress</name>
    <dbReference type="NCBI Taxonomy" id="3702"/>
    <lineage>
        <taxon>Eukaryota</taxon>
        <taxon>Viridiplantae</taxon>
        <taxon>Streptophyta</taxon>
        <taxon>Embryophyta</taxon>
        <taxon>Tracheophyta</taxon>
        <taxon>Spermatophyta</taxon>
        <taxon>Magnoliopsida</taxon>
        <taxon>eudicotyledons</taxon>
        <taxon>Gunneridae</taxon>
        <taxon>Pentapetalae</taxon>
        <taxon>rosids</taxon>
        <taxon>malvids</taxon>
        <taxon>Brassicales</taxon>
        <taxon>Brassicaceae</taxon>
        <taxon>Camelineae</taxon>
        <taxon>Arabidopsis</taxon>
    </lineage>
</organism>
<sequence length="141" mass="15570">MDQSSSTLLINQRKSSSSPTRIPPKQKRKSTTTHKPIKVRYISNPMRVETCPSKFRELVQELTGQDAADLPPSPTTFTAVDLHRPCESEMNLEPLDGEVRGEYYSPLDEEVFNAPQMSAGLSGFFSSGFYNVNALGSIGSL</sequence>
<dbReference type="EMBL" id="AC004261">
    <property type="protein sequence ID" value="AAD11994.1"/>
    <property type="molecule type" value="Genomic_DNA"/>
</dbReference>
<dbReference type="EMBL" id="CP002685">
    <property type="protein sequence ID" value="AEC09941.1"/>
    <property type="molecule type" value="Genomic_DNA"/>
</dbReference>
<dbReference type="EMBL" id="AY057686">
    <property type="protein sequence ID" value="AAL15317.1"/>
    <property type="molecule type" value="mRNA"/>
</dbReference>
<dbReference type="EMBL" id="AY099785">
    <property type="protein sequence ID" value="AAM20636.1"/>
    <property type="molecule type" value="mRNA"/>
</dbReference>
<dbReference type="EMBL" id="BT000291">
    <property type="protein sequence ID" value="AAN15610.1"/>
    <property type="molecule type" value="mRNA"/>
</dbReference>
<dbReference type="PIR" id="T02101">
    <property type="entry name" value="T02101"/>
</dbReference>
<dbReference type="RefSeq" id="NP_030663.1">
    <property type="nucleotide sequence ID" value="NM_129683.2"/>
</dbReference>
<dbReference type="SMR" id="O80669"/>
<dbReference type="BioGRID" id="4054">
    <property type="interactions" value="1"/>
</dbReference>
<dbReference type="STRING" id="3702.O80669"/>
<dbReference type="PaxDb" id="3702-AT2G41180.1"/>
<dbReference type="EnsemblPlants" id="AT2G41180.1">
    <property type="protein sequence ID" value="AT2G41180.1"/>
    <property type="gene ID" value="AT2G41180"/>
</dbReference>
<dbReference type="GeneID" id="818717"/>
<dbReference type="Gramene" id="AT2G41180.1">
    <property type="protein sequence ID" value="AT2G41180.1"/>
    <property type="gene ID" value="AT2G41180"/>
</dbReference>
<dbReference type="KEGG" id="ath:AT2G41180"/>
<dbReference type="Araport" id="AT2G41180"/>
<dbReference type="TAIR" id="AT2G41180">
    <property type="gene designation" value="SIB2"/>
</dbReference>
<dbReference type="eggNOG" id="ENOG502SFCE">
    <property type="taxonomic scope" value="Eukaryota"/>
</dbReference>
<dbReference type="HOGENOM" id="CLU_1733985_0_0_1"/>
<dbReference type="InParanoid" id="O80669"/>
<dbReference type="OMA" id="RPCESEM"/>
<dbReference type="OrthoDB" id="665788at2759"/>
<dbReference type="PhylomeDB" id="O80669"/>
<dbReference type="PRO" id="PR:O80669"/>
<dbReference type="Proteomes" id="UP000006548">
    <property type="component" value="Chromosome 2"/>
</dbReference>
<dbReference type="ExpressionAtlas" id="O80669">
    <property type="expression patterns" value="differential"/>
</dbReference>
<dbReference type="GO" id="GO:0009507">
    <property type="term" value="C:chloroplast"/>
    <property type="evidence" value="ECO:0000250"/>
    <property type="project" value="UniProtKB"/>
</dbReference>
<dbReference type="GO" id="GO:0005634">
    <property type="term" value="C:nucleus"/>
    <property type="evidence" value="ECO:0000314"/>
    <property type="project" value="TAIR"/>
</dbReference>
<dbReference type="GO" id="GO:0051091">
    <property type="term" value="P:positive regulation of DNA-binding transcription factor activity"/>
    <property type="evidence" value="ECO:0000314"/>
    <property type="project" value="UniProtKB"/>
</dbReference>
<dbReference type="InterPro" id="IPR039335">
    <property type="entry name" value="SIB1/2"/>
</dbReference>
<dbReference type="InterPro" id="IPR008889">
    <property type="entry name" value="VQ"/>
</dbReference>
<dbReference type="PANTHER" id="PTHR33624">
    <property type="entry name" value="SIGMA FACTOR BINDING PROTEIN 1, CHLOROPLASTIC"/>
    <property type="match status" value="1"/>
</dbReference>
<dbReference type="PANTHER" id="PTHR33624:SF15">
    <property type="entry name" value="SIGMA FACTOR BINDING PROTEIN 2, CHLOROPLASTIC"/>
    <property type="match status" value="1"/>
</dbReference>
<dbReference type="Pfam" id="PF05678">
    <property type="entry name" value="VQ"/>
    <property type="match status" value="1"/>
</dbReference>
<gene>
    <name type="primary">SIB2</name>
    <name evidence="5" type="synonym">VQ16</name>
    <name type="ordered locus">At2g41180</name>
    <name type="ORF">T3K9.5</name>
</gene>
<protein>
    <recommendedName>
        <fullName>Sigma factor binding protein 2, chloroplastic</fullName>
        <shortName>Sigma factor binding protein II</shortName>
    </recommendedName>
    <alternativeName>
        <fullName evidence="5">VQ motif-containing protein 16</fullName>
        <shortName evidence="5">AtVQ16</shortName>
    </alternativeName>
</protein>
<proteinExistence type="evidence at protein level"/>